<evidence type="ECO:0000250" key="1"/>
<evidence type="ECO:0000255" key="2"/>
<evidence type="ECO:0000269" key="3">
    <source>
    </source>
</evidence>
<evidence type="ECO:0000305" key="4"/>
<evidence type="ECO:0000305" key="5">
    <source>
    </source>
</evidence>
<dbReference type="EC" id="2.3.1.15"/>
<dbReference type="EC" id="2.3.1.n5"/>
<dbReference type="EMBL" id="U28379">
    <property type="protein sequence ID" value="AAA89139.1"/>
    <property type="molecule type" value="Genomic_DNA"/>
</dbReference>
<dbReference type="EMBL" id="U00096">
    <property type="protein sequence ID" value="AAC76095.1"/>
    <property type="molecule type" value="Genomic_DNA"/>
</dbReference>
<dbReference type="EMBL" id="AP009048">
    <property type="protein sequence ID" value="BAE77110.1"/>
    <property type="molecule type" value="Genomic_DNA"/>
</dbReference>
<dbReference type="EMBL" id="L12966">
    <property type="status" value="NOT_ANNOTATED_CDS"/>
    <property type="molecule type" value="Genomic_DNA"/>
</dbReference>
<dbReference type="PIR" id="A65094">
    <property type="entry name" value="A65094"/>
</dbReference>
<dbReference type="RefSeq" id="NP_417531.1">
    <property type="nucleotide sequence ID" value="NC_000913.3"/>
</dbReference>
<dbReference type="RefSeq" id="WP_001272796.1">
    <property type="nucleotide sequence ID" value="NZ_STEB01000001.1"/>
</dbReference>
<dbReference type="SMR" id="P60782"/>
<dbReference type="BioGRID" id="4259257">
    <property type="interactions" value="300"/>
</dbReference>
<dbReference type="FunCoup" id="P60782">
    <property type="interactions" value="354"/>
</dbReference>
<dbReference type="IntAct" id="P60782">
    <property type="interactions" value="1"/>
</dbReference>
<dbReference type="STRING" id="511145.b3059"/>
<dbReference type="TCDB" id="9.B.31.1.1">
    <property type="family name" value="the plsy/yqih (plsy) family"/>
</dbReference>
<dbReference type="jPOST" id="P60782"/>
<dbReference type="PaxDb" id="511145-b3059"/>
<dbReference type="EnsemblBacteria" id="AAC76095">
    <property type="protein sequence ID" value="AAC76095"/>
    <property type="gene ID" value="b3059"/>
</dbReference>
<dbReference type="GeneID" id="93778934"/>
<dbReference type="GeneID" id="947561"/>
<dbReference type="KEGG" id="ecj:JW3031"/>
<dbReference type="KEGG" id="eco:b3059"/>
<dbReference type="KEGG" id="ecoc:C3026_16715"/>
<dbReference type="PATRIC" id="fig|1411691.4.peg.3672"/>
<dbReference type="EchoBASE" id="EB1625"/>
<dbReference type="eggNOG" id="COG0344">
    <property type="taxonomic scope" value="Bacteria"/>
</dbReference>
<dbReference type="HOGENOM" id="CLU_081254_0_2_6"/>
<dbReference type="InParanoid" id="P60782"/>
<dbReference type="OMA" id="PVWLGFK"/>
<dbReference type="OrthoDB" id="9777124at2"/>
<dbReference type="PhylomeDB" id="P60782"/>
<dbReference type="BioCyc" id="EcoCyc:EG11674-MONOMER"/>
<dbReference type="UniPathway" id="UPA00085"/>
<dbReference type="PRO" id="PR:P60782"/>
<dbReference type="Proteomes" id="UP000000625">
    <property type="component" value="Chromosome"/>
</dbReference>
<dbReference type="GO" id="GO:0005886">
    <property type="term" value="C:plasma membrane"/>
    <property type="evidence" value="ECO:0000314"/>
    <property type="project" value="EcoCyc"/>
</dbReference>
<dbReference type="GO" id="GO:0043772">
    <property type="term" value="F:acyl-phosphate glycerol-3-phosphate acyltransferase activity"/>
    <property type="evidence" value="ECO:0007669"/>
    <property type="project" value="InterPro"/>
</dbReference>
<dbReference type="GO" id="GO:0004366">
    <property type="term" value="F:glycerol-3-phosphate O-acyltransferase activity"/>
    <property type="evidence" value="ECO:0007669"/>
    <property type="project" value="UniProtKB-UniRule"/>
</dbReference>
<dbReference type="GO" id="GO:0008654">
    <property type="term" value="P:phospholipid biosynthetic process"/>
    <property type="evidence" value="ECO:0007669"/>
    <property type="project" value="UniProtKB-UniRule"/>
</dbReference>
<dbReference type="HAMAP" id="MF_01043">
    <property type="entry name" value="PlsY"/>
    <property type="match status" value="1"/>
</dbReference>
<dbReference type="InterPro" id="IPR003811">
    <property type="entry name" value="G3P_acylTferase_PlsY"/>
</dbReference>
<dbReference type="NCBIfam" id="TIGR00023">
    <property type="entry name" value="glycerol-3-phosphate 1-O-acyltransferase PlsY"/>
    <property type="match status" value="1"/>
</dbReference>
<dbReference type="PANTHER" id="PTHR30309:SF0">
    <property type="entry name" value="GLYCEROL-3-PHOSPHATE ACYLTRANSFERASE-RELATED"/>
    <property type="match status" value="1"/>
</dbReference>
<dbReference type="PANTHER" id="PTHR30309">
    <property type="entry name" value="INNER MEMBRANE PROTEIN YGIH"/>
    <property type="match status" value="1"/>
</dbReference>
<dbReference type="Pfam" id="PF02660">
    <property type="entry name" value="G3P_acyltransf"/>
    <property type="match status" value="1"/>
</dbReference>
<dbReference type="SMART" id="SM01207">
    <property type="entry name" value="G3P_acyltransf"/>
    <property type="match status" value="1"/>
</dbReference>
<comment type="function">
    <text evidence="5">Catalyzes the transfer of an acyl group from acyl-ACP to glycerol-3-phosphate (G3P) to form lysophosphatidic acid (LPA). This enzyme can also utilize acyl-CoA as fatty acyl donor, but not acyl-PO(4) (Probable).</text>
</comment>
<comment type="catalytic activity">
    <reaction evidence="3">
        <text>sn-glycerol 3-phosphate + an acyl-CoA = a 1-acyl-sn-glycero-3-phosphate + CoA</text>
        <dbReference type="Rhea" id="RHEA:15325"/>
        <dbReference type="ChEBI" id="CHEBI:57287"/>
        <dbReference type="ChEBI" id="CHEBI:57597"/>
        <dbReference type="ChEBI" id="CHEBI:57970"/>
        <dbReference type="ChEBI" id="CHEBI:58342"/>
        <dbReference type="EC" id="2.3.1.15"/>
    </reaction>
</comment>
<comment type="catalytic activity">
    <reaction evidence="3">
        <text>a fatty acyl-[ACP] + sn-glycerol 3-phosphate = a 1-acyl-sn-glycero-3-phosphate + holo-[ACP]</text>
        <dbReference type="Rhea" id="RHEA:42300"/>
        <dbReference type="Rhea" id="RHEA-COMP:9685"/>
        <dbReference type="Rhea" id="RHEA-COMP:14125"/>
        <dbReference type="ChEBI" id="CHEBI:57597"/>
        <dbReference type="ChEBI" id="CHEBI:57970"/>
        <dbReference type="ChEBI" id="CHEBI:64479"/>
        <dbReference type="ChEBI" id="CHEBI:138651"/>
        <dbReference type="EC" id="2.3.1.n5"/>
    </reaction>
</comment>
<comment type="pathway">
    <text>Lipid metabolism; phospholipid metabolism.</text>
</comment>
<comment type="subunit">
    <text evidence="1">Probably interacts with PlsX.</text>
</comment>
<comment type="subcellular location">
    <subcellularLocation>
        <location>Cell inner membrane</location>
        <topology>Multi-pass membrane protein</topology>
    </subcellularLocation>
</comment>
<comment type="similarity">
    <text evidence="4">Belongs to the PlsY family.</text>
</comment>
<proteinExistence type="evidence at protein level"/>
<sequence>MSAIAPGMILIAYLCGSISSAILVCRLCGLPDPRTSGSGNPGATNVLRIGGKGAAVAVLIFDVLKGMLPVWGAYELGVSPFWLGLIAIAACLGHIWPVFFGFKGGKGVATAFGAIAPIGWDLTGVMAGTWLLTVLLSGYSSLGAIVSALIAPFYVWWFKPQFTFPVSMLSCLILLRHHDNIQRLWRRQETKIWTKFKRKREKDPE</sequence>
<gene>
    <name type="primary">plsY</name>
    <name type="synonym">ygiH</name>
    <name type="ordered locus">b3059</name>
    <name type="ordered locus">JW3031</name>
</gene>
<accession>P60782</accession>
<accession>P31056</accession>
<accession>Q2M9E6</accession>
<reference key="1">
    <citation type="journal article" date="1997" name="Science">
        <title>The complete genome sequence of Escherichia coli K-12.</title>
        <authorList>
            <person name="Blattner F.R."/>
            <person name="Plunkett G. III"/>
            <person name="Bloch C.A."/>
            <person name="Perna N.T."/>
            <person name="Burland V."/>
            <person name="Riley M."/>
            <person name="Collado-Vides J."/>
            <person name="Glasner J.D."/>
            <person name="Rode C.K."/>
            <person name="Mayhew G.F."/>
            <person name="Gregor J."/>
            <person name="Davis N.W."/>
            <person name="Kirkpatrick H.A."/>
            <person name="Goeden M.A."/>
            <person name="Rose D.J."/>
            <person name="Mau B."/>
            <person name="Shao Y."/>
        </authorList>
    </citation>
    <scope>NUCLEOTIDE SEQUENCE [LARGE SCALE GENOMIC DNA]</scope>
    <source>
        <strain>K12 / MG1655 / ATCC 47076</strain>
    </source>
</reference>
<reference key="2">
    <citation type="journal article" date="2006" name="Mol. Syst. Biol.">
        <title>Highly accurate genome sequences of Escherichia coli K-12 strains MG1655 and W3110.</title>
        <authorList>
            <person name="Hayashi K."/>
            <person name="Morooka N."/>
            <person name="Yamamoto Y."/>
            <person name="Fujita K."/>
            <person name="Isono K."/>
            <person name="Choi S."/>
            <person name="Ohtsubo E."/>
            <person name="Baba T."/>
            <person name="Wanner B.L."/>
            <person name="Mori H."/>
            <person name="Horiuchi T."/>
        </authorList>
    </citation>
    <scope>NUCLEOTIDE SEQUENCE [LARGE SCALE GENOMIC DNA]</scope>
    <source>
        <strain>K12 / W3110 / ATCC 27325 / DSM 5911</strain>
    </source>
</reference>
<reference key="3">
    <citation type="journal article" date="1993" name="J. Bacteriol.">
        <title>Amplification of the bacA gene confers bacitracin resistance to Escherichia coli.</title>
        <authorList>
            <person name="Cain B.D."/>
            <person name="Norton P.J."/>
            <person name="Eubanks W."/>
            <person name="Nick H.S."/>
            <person name="Allen C.M."/>
        </authorList>
    </citation>
    <scope>NUCLEOTIDE SEQUENCE [GENOMIC DNA] OF 1-204</scope>
    <source>
        <strain>K12 / ATCC 35607 / JM83</strain>
    </source>
</reference>
<reference key="4">
    <citation type="journal article" date="1994" name="Nucleic Acids Res.">
        <title>Intrinsic and extrinsic approaches for detecting genes in a bacterial genome.</title>
        <authorList>
            <person name="Borodovsky M."/>
            <person name="Rudd K.E."/>
            <person name="Koonin E.V."/>
        </authorList>
    </citation>
    <scope>IDENTIFICATION</scope>
</reference>
<reference key="5">
    <citation type="journal article" date="2005" name="Science">
        <title>Global topology analysis of the Escherichia coli inner membrane proteome.</title>
        <authorList>
            <person name="Daley D.O."/>
            <person name="Rapp M."/>
            <person name="Granseth E."/>
            <person name="Melen K."/>
            <person name="Drew D."/>
            <person name="von Heijne G."/>
        </authorList>
    </citation>
    <scope>TOPOLOGY [LARGE SCALE ANALYSIS]</scope>
    <source>
        <strain>K12 / MG1655 / ATCC 47076</strain>
    </source>
</reference>
<reference key="6">
    <citation type="journal article" date="2006" name="Mol. Cell">
        <title>Acyl-phosphates initiate membrane phospholipid synthesis in Gram-positive pathogens.</title>
        <authorList>
            <person name="Lu Y.-J."/>
            <person name="Zhang Y.-M."/>
            <person name="Grimes K.D."/>
            <person name="Qi J."/>
            <person name="Lee R.E."/>
            <person name="Rock C.O."/>
        </authorList>
    </citation>
    <scope>CATALYTIC ACTIVITY</scope>
    <scope>FATTY ACYL DONOR SPECIFICITY</scope>
</reference>
<reference key="7">
    <citation type="journal article" date="2007" name="BMC Microbiol.">
        <title>Involvement of the YneS/YgiH and PlsX proteins in phospholipid biosynthesis in both Bacillus subtilis and Escherichia coli.</title>
        <authorList>
            <person name="Yoshimura M."/>
            <person name="Oshima T."/>
            <person name="Ogasawara N."/>
        </authorList>
    </citation>
    <scope>FUNCTION IN PHOSPHOLIPID BIOSYNTHESIS</scope>
    <source>
        <strain>K12 / W3110 / ATCC 27325 / DSM 5911</strain>
    </source>
</reference>
<name>PLSY_ECOLI</name>
<protein>
    <recommendedName>
        <fullName>Probable glycerol-3-phosphate acyltransferase</fullName>
    </recommendedName>
    <alternativeName>
        <fullName>G3P acyltransferase</fullName>
        <shortName>GPAT</shortName>
        <ecNumber>2.3.1.15</ecNumber>
        <ecNumber>2.3.1.n5</ecNumber>
    </alternativeName>
    <alternativeName>
        <fullName>Lysophosphatidic acid synthase</fullName>
        <shortName>LPA synthase</shortName>
    </alternativeName>
</protein>
<keyword id="KW-0997">Cell inner membrane</keyword>
<keyword id="KW-1003">Cell membrane</keyword>
<keyword id="KW-0444">Lipid biosynthesis</keyword>
<keyword id="KW-0443">Lipid metabolism</keyword>
<keyword id="KW-0472">Membrane</keyword>
<keyword id="KW-0594">Phospholipid biosynthesis</keyword>
<keyword id="KW-1208">Phospholipid metabolism</keyword>
<keyword id="KW-1185">Reference proteome</keyword>
<keyword id="KW-0808">Transferase</keyword>
<keyword id="KW-0812">Transmembrane</keyword>
<keyword id="KW-1133">Transmembrane helix</keyword>
<organism>
    <name type="scientific">Escherichia coli (strain K12)</name>
    <dbReference type="NCBI Taxonomy" id="83333"/>
    <lineage>
        <taxon>Bacteria</taxon>
        <taxon>Pseudomonadati</taxon>
        <taxon>Pseudomonadota</taxon>
        <taxon>Gammaproteobacteria</taxon>
        <taxon>Enterobacterales</taxon>
        <taxon>Enterobacteriaceae</taxon>
        <taxon>Escherichia</taxon>
    </lineage>
</organism>
<feature type="chain" id="PRO_0000188368" description="Probable glycerol-3-phosphate acyltransferase">
    <location>
        <begin position="1"/>
        <end position="205"/>
    </location>
</feature>
<feature type="topological domain" description="Periplasmic" evidence="2">
    <location>
        <begin position="1"/>
        <end position="3"/>
    </location>
</feature>
<feature type="transmembrane region" description="Helical" evidence="2">
    <location>
        <begin position="4"/>
        <end position="24"/>
    </location>
</feature>
<feature type="topological domain" description="Cytoplasmic" evidence="2">
    <location>
        <begin position="25"/>
        <end position="52"/>
    </location>
</feature>
<feature type="transmembrane region" description="Helical" evidence="2">
    <location>
        <begin position="53"/>
        <end position="73"/>
    </location>
</feature>
<feature type="topological domain" description="Periplasmic" evidence="2">
    <location>
        <begin position="74"/>
        <end position="80"/>
    </location>
</feature>
<feature type="transmembrane region" description="Helical" evidence="2">
    <location>
        <begin position="81"/>
        <end position="101"/>
    </location>
</feature>
<feature type="topological domain" description="Cytoplasmic" evidence="2">
    <location>
        <begin position="102"/>
        <end position="111"/>
    </location>
</feature>
<feature type="transmembrane region" description="Helical" evidence="2">
    <location>
        <begin position="112"/>
        <end position="132"/>
    </location>
</feature>
<feature type="topological domain" description="Periplasmic" evidence="2">
    <location>
        <begin position="133"/>
        <end position="137"/>
    </location>
</feature>
<feature type="transmembrane region" description="Helical" evidence="2">
    <location>
        <begin position="138"/>
        <end position="158"/>
    </location>
</feature>
<feature type="topological domain" description="Cytoplasmic" evidence="2">
    <location>
        <begin position="159"/>
        <end position="205"/>
    </location>
</feature>